<accession>O39433</accession>
<protein>
    <recommendedName>
        <fullName>Non-structural protein 3x</fullName>
        <shortName>ns3x</shortName>
    </recommendedName>
    <alternativeName>
        <fullName>Accessory protein 3x</fullName>
    </alternativeName>
    <alternativeName>
        <fullName>ns3b</fullName>
    </alternativeName>
</protein>
<feature type="chain" id="PRO_0000283983" description="Non-structural protein 3x">
    <location>
        <begin position="1"/>
        <end position="71"/>
    </location>
</feature>
<name>NS3X_FIPV</name>
<evidence type="ECO:0000305" key="1"/>
<sequence length="71" mass="8456">MLSLVSPLLKKSIVIQLFSITVYKFKAKFWYKLPFETRLCIIKHTRPKALSVTKQVKRDYRKIAILNSMRK</sequence>
<comment type="caution">
    <text evidence="1">Feline coronavirus genome contains both a truncated ns3b protein and a ns3x protein. Since it is not clear if the ns3b locus is expressed, the ns3x protein is sometimes described as ns3b.</text>
</comment>
<proteinExistence type="predicted"/>
<organism>
    <name type="scientific">Feline coronavirus (strain FIPV WSU-79/1146)</name>
    <name type="common">FCoV</name>
    <dbReference type="NCBI Taxonomy" id="33734"/>
    <lineage>
        <taxon>Viruses</taxon>
        <taxon>Riboviria</taxon>
        <taxon>Orthornavirae</taxon>
        <taxon>Pisuviricota</taxon>
        <taxon>Pisoniviricetes</taxon>
        <taxon>Nidovirales</taxon>
        <taxon>Cornidovirineae</taxon>
        <taxon>Coronaviridae</taxon>
        <taxon>Orthocoronavirinae</taxon>
        <taxon>Alphacoronavirus</taxon>
        <taxon>Tegacovirus</taxon>
        <taxon>Alphacoronavirus 1</taxon>
    </lineage>
</organism>
<dbReference type="EMBL" id="AF033000">
    <property type="protein sequence ID" value="AAB87469.1"/>
    <property type="molecule type" value="mRNA"/>
</dbReference>
<dbReference type="EMBL" id="DQ010921">
    <property type="status" value="NOT_ANNOTATED_CDS"/>
    <property type="molecule type" value="Genomic_RNA"/>
</dbReference>
<dbReference type="EMBL" id="AY994055">
    <property type="protein sequence ID" value="AAY16377.1"/>
    <property type="molecule type" value="Genomic_RNA"/>
</dbReference>
<dbReference type="KEGG" id="vg:10040182"/>
<dbReference type="Proteomes" id="UP000000835">
    <property type="component" value="Segment"/>
</dbReference>
<dbReference type="Proteomes" id="UP000140386">
    <property type="component" value="Genome"/>
</dbReference>
<organismHost>
    <name type="scientific">Felidae</name>
    <name type="common">cat family</name>
    <dbReference type="NCBI Taxonomy" id="9681"/>
</organismHost>
<keyword id="KW-1185">Reference proteome</keyword>
<reference key="1">
    <citation type="journal article" date="1998" name="Virus Genes">
        <title>Nucleotide sequence of the inter-structural gene region of feline infectious peritonitis virus.</title>
        <authorList>
            <person name="Yamanaka M."/>
            <person name="Crisp T."/>
            <person name="Brown R."/>
            <person name="Dale B."/>
        </authorList>
    </citation>
    <scope>NUCLEOTIDE SEQUENCE [MRNA]</scope>
</reference>
<reference key="2">
    <citation type="journal article" date="2005" name="J. Gen. Virol.">
        <title>Genomic RNA sequence of Feline coronavirus strain FIPV WSU-79/1146.</title>
        <authorList>
            <person name="Dye C."/>
            <person name="Siddell S.G."/>
        </authorList>
    </citation>
    <scope>NUCLEOTIDE SEQUENCE [GENOMIC RNA]</scope>
</reference>
<reference key="3">
    <citation type="submission" date="2005-03" db="EMBL/GenBank/DDBJ databases">
        <authorList>
            <person name="Haijema B.J."/>
            <person name="de Groot-Mijnes J.D.F."/>
            <person name="Vennema H."/>
            <person name="Raamsman M.J."/>
            <person name="Rottier P.J.M."/>
            <person name="de Groot R.J."/>
        </authorList>
    </citation>
    <scope>NUCLEOTIDE SEQUENCE [GENOMIC RNA]</scope>
</reference>
<gene>
    <name type="ORF">3x</name>
</gene>